<gene>
    <name evidence="1" type="primary">rpoZ</name>
    <name type="ordered locus">BT9727_3611</name>
</gene>
<feature type="chain" id="PRO_0000237434" description="DNA-directed RNA polymerase subunit omega">
    <location>
        <begin position="1"/>
        <end position="70"/>
    </location>
</feature>
<comment type="function">
    <text evidence="1">Promotes RNA polymerase assembly. Latches the N- and C-terminal regions of the beta' subunit thereby facilitating its interaction with the beta and alpha subunits.</text>
</comment>
<comment type="catalytic activity">
    <reaction evidence="1">
        <text>RNA(n) + a ribonucleoside 5'-triphosphate = RNA(n+1) + diphosphate</text>
        <dbReference type="Rhea" id="RHEA:21248"/>
        <dbReference type="Rhea" id="RHEA-COMP:14527"/>
        <dbReference type="Rhea" id="RHEA-COMP:17342"/>
        <dbReference type="ChEBI" id="CHEBI:33019"/>
        <dbReference type="ChEBI" id="CHEBI:61557"/>
        <dbReference type="ChEBI" id="CHEBI:140395"/>
        <dbReference type="EC" id="2.7.7.6"/>
    </reaction>
</comment>
<comment type="subunit">
    <text evidence="1">The RNAP catalytic core consists of 2 alpha, 1 beta, 1 beta' and 1 omega subunit. When a sigma factor is associated with the core the holoenzyme is formed, which can initiate transcription.</text>
</comment>
<comment type="similarity">
    <text evidence="1">Belongs to the RNA polymerase subunit omega family.</text>
</comment>
<evidence type="ECO:0000255" key="1">
    <source>
        <dbReference type="HAMAP-Rule" id="MF_00366"/>
    </source>
</evidence>
<proteinExistence type="inferred from homology"/>
<protein>
    <recommendedName>
        <fullName evidence="1">DNA-directed RNA polymerase subunit omega</fullName>
        <shortName evidence="1">RNAP omega subunit</shortName>
        <ecNumber evidence="1">2.7.7.6</ecNumber>
    </recommendedName>
    <alternativeName>
        <fullName evidence="1">RNA polymerase omega subunit</fullName>
    </alternativeName>
    <alternativeName>
        <fullName evidence="1">Transcriptase subunit omega</fullName>
    </alternativeName>
</protein>
<sequence>MLNPSIDSLLTKIDSKYTLVTVAAKRAREMQLANNCVVEKPVSHKCVGKALEEIDMEALSYVPSEDKVTE</sequence>
<keyword id="KW-0240">DNA-directed RNA polymerase</keyword>
<keyword id="KW-0548">Nucleotidyltransferase</keyword>
<keyword id="KW-0804">Transcription</keyword>
<keyword id="KW-0808">Transferase</keyword>
<name>RPOZ_BACHK</name>
<accession>Q6HEU5</accession>
<reference key="1">
    <citation type="journal article" date="2006" name="J. Bacteriol.">
        <title>Pathogenomic sequence analysis of Bacillus cereus and Bacillus thuringiensis isolates closely related to Bacillus anthracis.</title>
        <authorList>
            <person name="Han C.S."/>
            <person name="Xie G."/>
            <person name="Challacombe J.F."/>
            <person name="Altherr M.R."/>
            <person name="Bhotika S.S."/>
            <person name="Bruce D."/>
            <person name="Campbell C.S."/>
            <person name="Campbell M.L."/>
            <person name="Chen J."/>
            <person name="Chertkov O."/>
            <person name="Cleland C."/>
            <person name="Dimitrijevic M."/>
            <person name="Doggett N.A."/>
            <person name="Fawcett J.J."/>
            <person name="Glavina T."/>
            <person name="Goodwin L.A."/>
            <person name="Hill K.K."/>
            <person name="Hitchcock P."/>
            <person name="Jackson P.J."/>
            <person name="Keim P."/>
            <person name="Kewalramani A.R."/>
            <person name="Longmire J."/>
            <person name="Lucas S."/>
            <person name="Malfatti S."/>
            <person name="McMurry K."/>
            <person name="Meincke L.J."/>
            <person name="Misra M."/>
            <person name="Moseman B.L."/>
            <person name="Mundt M."/>
            <person name="Munk A.C."/>
            <person name="Okinaka R.T."/>
            <person name="Parson-Quintana B."/>
            <person name="Reilly L.P."/>
            <person name="Richardson P."/>
            <person name="Robinson D.L."/>
            <person name="Rubin E."/>
            <person name="Saunders E."/>
            <person name="Tapia R."/>
            <person name="Tesmer J.G."/>
            <person name="Thayer N."/>
            <person name="Thompson L.S."/>
            <person name="Tice H."/>
            <person name="Ticknor L.O."/>
            <person name="Wills P.L."/>
            <person name="Brettin T.S."/>
            <person name="Gilna P."/>
        </authorList>
    </citation>
    <scope>NUCLEOTIDE SEQUENCE [LARGE SCALE GENOMIC DNA]</scope>
    <source>
        <strain>97-27</strain>
    </source>
</reference>
<dbReference type="EC" id="2.7.7.6" evidence="1"/>
<dbReference type="EMBL" id="AE017355">
    <property type="protein sequence ID" value="AAT61606.1"/>
    <property type="molecule type" value="Genomic_DNA"/>
</dbReference>
<dbReference type="RefSeq" id="WP_000933970.1">
    <property type="nucleotide sequence ID" value="NC_005957.1"/>
</dbReference>
<dbReference type="RefSeq" id="YP_037931.1">
    <property type="nucleotide sequence ID" value="NC_005957.1"/>
</dbReference>
<dbReference type="SMR" id="Q6HEU5"/>
<dbReference type="GeneID" id="75087006"/>
<dbReference type="KEGG" id="btk:BT9727_3611"/>
<dbReference type="PATRIC" id="fig|281309.8.peg.3849"/>
<dbReference type="HOGENOM" id="CLU_125406_6_0_9"/>
<dbReference type="Proteomes" id="UP000001301">
    <property type="component" value="Chromosome"/>
</dbReference>
<dbReference type="GO" id="GO:0000428">
    <property type="term" value="C:DNA-directed RNA polymerase complex"/>
    <property type="evidence" value="ECO:0007669"/>
    <property type="project" value="UniProtKB-KW"/>
</dbReference>
<dbReference type="GO" id="GO:0003677">
    <property type="term" value="F:DNA binding"/>
    <property type="evidence" value="ECO:0007669"/>
    <property type="project" value="UniProtKB-UniRule"/>
</dbReference>
<dbReference type="GO" id="GO:0003899">
    <property type="term" value="F:DNA-directed RNA polymerase activity"/>
    <property type="evidence" value="ECO:0007669"/>
    <property type="project" value="UniProtKB-UniRule"/>
</dbReference>
<dbReference type="GO" id="GO:0006351">
    <property type="term" value="P:DNA-templated transcription"/>
    <property type="evidence" value="ECO:0007669"/>
    <property type="project" value="UniProtKB-UniRule"/>
</dbReference>
<dbReference type="Gene3D" id="3.90.940.10">
    <property type="match status" value="1"/>
</dbReference>
<dbReference type="HAMAP" id="MF_00366">
    <property type="entry name" value="RNApol_bact_RpoZ"/>
    <property type="match status" value="1"/>
</dbReference>
<dbReference type="InterPro" id="IPR003716">
    <property type="entry name" value="DNA-dir_RNA_pol_omega"/>
</dbReference>
<dbReference type="InterPro" id="IPR006110">
    <property type="entry name" value="Pol_omega/Rpo6/RPB6"/>
</dbReference>
<dbReference type="InterPro" id="IPR036161">
    <property type="entry name" value="RPB6/omega-like_sf"/>
</dbReference>
<dbReference type="NCBIfam" id="TIGR00690">
    <property type="entry name" value="rpoZ"/>
    <property type="match status" value="1"/>
</dbReference>
<dbReference type="PANTHER" id="PTHR34476">
    <property type="entry name" value="DNA-DIRECTED RNA POLYMERASE SUBUNIT OMEGA"/>
    <property type="match status" value="1"/>
</dbReference>
<dbReference type="PANTHER" id="PTHR34476:SF1">
    <property type="entry name" value="DNA-DIRECTED RNA POLYMERASE SUBUNIT OMEGA"/>
    <property type="match status" value="1"/>
</dbReference>
<dbReference type="Pfam" id="PF01192">
    <property type="entry name" value="RNA_pol_Rpb6"/>
    <property type="match status" value="1"/>
</dbReference>
<dbReference type="SMART" id="SM01409">
    <property type="entry name" value="RNA_pol_Rpb6"/>
    <property type="match status" value="1"/>
</dbReference>
<dbReference type="SUPFAM" id="SSF63562">
    <property type="entry name" value="RPB6/omega subunit-like"/>
    <property type="match status" value="1"/>
</dbReference>
<organism>
    <name type="scientific">Bacillus thuringiensis subsp. konkukian (strain 97-27)</name>
    <dbReference type="NCBI Taxonomy" id="281309"/>
    <lineage>
        <taxon>Bacteria</taxon>
        <taxon>Bacillati</taxon>
        <taxon>Bacillota</taxon>
        <taxon>Bacilli</taxon>
        <taxon>Bacillales</taxon>
        <taxon>Bacillaceae</taxon>
        <taxon>Bacillus</taxon>
        <taxon>Bacillus cereus group</taxon>
    </lineage>
</organism>